<sequence>DTAPLEKKSHCLSQGLSGLLSLGKLFRDSSWTLSKEELSRGVSQFGLDFSDADVNKLFSDFEKKAAVEAAFKHLDKTGDGVVTVEDIKGVYSAKVVKGEATEEEILKKFLNMFESSTSVDGKVTKKEFLDYYSGLSK</sequence>
<organism>
    <name type="scientific">Homarus americanus</name>
    <name type="common">American lobster</name>
    <dbReference type="NCBI Taxonomy" id="6706"/>
    <lineage>
        <taxon>Eukaryota</taxon>
        <taxon>Metazoa</taxon>
        <taxon>Ecdysozoa</taxon>
        <taxon>Arthropoda</taxon>
        <taxon>Crustacea</taxon>
        <taxon>Multicrustacea</taxon>
        <taxon>Malacostraca</taxon>
        <taxon>Eumalacostraca</taxon>
        <taxon>Eucarida</taxon>
        <taxon>Decapoda</taxon>
        <taxon>Pleocyemata</taxon>
        <taxon>Astacidea</taxon>
        <taxon>Nephropoidea</taxon>
        <taxon>Nephropidae</taxon>
        <taxon>Homarus</taxon>
    </lineage>
</organism>
<accession>P80364</accession>
<feature type="chain" id="PRO_0000073543" description="Crustacean calcium-binding protein 23">
    <location>
        <begin position="1" status="less than"/>
        <end position="137" status="greater than"/>
    </location>
</feature>
<feature type="domain" description="EF-hand 1" evidence="1">
    <location>
        <begin position="27"/>
        <end position="48"/>
    </location>
</feature>
<feature type="domain" description="EF-hand 2" evidence="1">
    <location>
        <begin position="62"/>
        <end position="97"/>
    </location>
</feature>
<feature type="domain" description="EF-hand 3" evidence="2">
    <location>
        <begin position="100"/>
        <end position="135"/>
    </location>
</feature>
<feature type="unsure residue" description="L or I">
    <location>
        <position position="5"/>
    </location>
</feature>
<feature type="unsure residue" description="L or I">
    <location>
        <position position="12"/>
    </location>
</feature>
<feature type="unsure residue" description="L or I">
    <location>
        <position position="16"/>
    </location>
</feature>
<feature type="unsure residue" description="L or I">
    <location>
        <position position="19"/>
    </location>
</feature>
<feature type="unsure residue" description="L or I">
    <location>
        <position position="20"/>
    </location>
</feature>
<feature type="unsure residue" description="L or I">
    <location>
        <position position="22"/>
    </location>
</feature>
<feature type="unsure residue" description="L or I">
    <location>
        <position position="25"/>
    </location>
</feature>
<feature type="unsure residue" description="L or I">
    <location>
        <position position="33"/>
    </location>
</feature>
<feature type="unsure residue" description="L or I">
    <location>
        <position position="38"/>
    </location>
</feature>
<feature type="unsure residue" description="L or I">
    <location>
        <position position="47"/>
    </location>
</feature>
<feature type="unsure residue" description="L or I">
    <location>
        <position position="57"/>
    </location>
</feature>
<feature type="unsure residue" description="L or I">
    <location>
        <position position="74"/>
    </location>
</feature>
<feature type="unsure residue" description="I or L">
    <location>
        <position position="87"/>
    </location>
</feature>
<feature type="unsure residue" description="I or L">
    <location>
        <position position="105"/>
    </location>
</feature>
<feature type="unsure residue" description="L or I">
    <location>
        <position position="106"/>
    </location>
</feature>
<feature type="unsure residue" description="L or I">
    <location>
        <position position="110"/>
    </location>
</feature>
<feature type="unsure residue" description="L or I">
    <location>
        <position position="129"/>
    </location>
</feature>
<feature type="unsure residue" description="L or I">
    <location>
        <position position="135"/>
    </location>
</feature>
<feature type="non-consecutive residues" evidence="2">
    <location>
        <begin position="8"/>
        <end position="9"/>
    </location>
</feature>
<feature type="non-consecutive residues" evidence="2">
    <location>
        <begin position="27"/>
        <end position="28"/>
    </location>
</feature>
<feature type="non-consecutive residues" evidence="2">
    <location>
        <begin position="63"/>
        <end position="64"/>
    </location>
</feature>
<feature type="non-consecutive residues" evidence="2">
    <location>
        <begin position="94"/>
        <end position="95"/>
    </location>
</feature>
<feature type="non-terminal residue">
    <location>
        <position position="1"/>
    </location>
</feature>
<feature type="non-terminal residue">
    <location>
        <position position="137"/>
    </location>
</feature>
<keyword id="KW-0106">Calcium</keyword>
<keyword id="KW-0903">Direct protein sequencing</keyword>
<keyword id="KW-1015">Disulfide bond</keyword>
<keyword id="KW-0479">Metal-binding</keyword>
<keyword id="KW-0677">Repeat</keyword>
<comment type="function">
    <text>Possibly acts as a regulatory protein and not as a calcium buffer or transport protein.</text>
</comment>
<comment type="subunit">
    <text>Monomer or disulfide-linked dimers.</text>
</comment>
<comment type="miscellaneous">
    <text>This protein binds calcium.</text>
</comment>
<evidence type="ECO:0000255" key="1">
    <source>
        <dbReference type="PROSITE-ProRule" id="PRU00448"/>
    </source>
</evidence>
<evidence type="ECO:0000305" key="2"/>
<name>CCB23_HOMAM</name>
<dbReference type="SMR" id="P80364"/>
<dbReference type="OrthoDB" id="444540at2759"/>
<dbReference type="GO" id="GO:0005509">
    <property type="term" value="F:calcium ion binding"/>
    <property type="evidence" value="ECO:0007669"/>
    <property type="project" value="InterPro"/>
</dbReference>
<dbReference type="Gene3D" id="1.10.238.10">
    <property type="entry name" value="EF-hand"/>
    <property type="match status" value="1"/>
</dbReference>
<dbReference type="InterPro" id="IPR051581">
    <property type="entry name" value="Ca-bind_SignalingProt"/>
</dbReference>
<dbReference type="InterPro" id="IPR011992">
    <property type="entry name" value="EF-hand-dom_pair"/>
</dbReference>
<dbReference type="InterPro" id="IPR002048">
    <property type="entry name" value="EF_hand_dom"/>
</dbReference>
<dbReference type="PANTHER" id="PTHR34524">
    <property type="entry name" value="CALCYPHOSIN"/>
    <property type="match status" value="1"/>
</dbReference>
<dbReference type="PANTHER" id="PTHR34524:SF6">
    <property type="entry name" value="CALCYPHOSINE LIKE"/>
    <property type="match status" value="1"/>
</dbReference>
<dbReference type="SUPFAM" id="SSF47473">
    <property type="entry name" value="EF-hand"/>
    <property type="match status" value="1"/>
</dbReference>
<dbReference type="PROSITE" id="PS50222">
    <property type="entry name" value="EF_HAND_2"/>
    <property type="match status" value="2"/>
</dbReference>
<protein>
    <recommendedName>
        <fullName>Crustacean calcium-binding protein 23</fullName>
        <shortName>CCBP-23</shortName>
    </recommendedName>
</protein>
<proteinExistence type="evidence at protein level"/>
<reference key="1">
    <citation type="journal article" date="1995" name="Eur. J. Biochem.">
        <title>A novel EF-hand Ca(2+)-binding protein from abdominal muscle of crustaceans with similarity to calcyphosine from dog thyroidea.</title>
        <authorList>
            <person name="Sauter A."/>
            <person name="Staudenmann W."/>
            <person name="Hughes G.J."/>
            <person name="Heizmann C.W."/>
        </authorList>
    </citation>
    <scope>PROTEIN SEQUENCE</scope>
    <source>
        <tissue>Muscle</tissue>
    </source>
</reference>